<dbReference type="EC" id="3.1.13.-" evidence="3"/>
<dbReference type="EMBL" id="AF286720">
    <property type="protein sequence ID" value="AAG40733.1"/>
    <property type="molecule type" value="mRNA"/>
</dbReference>
<dbReference type="EMBL" id="AB022210">
    <property type="protein sequence ID" value="BAB09325.1"/>
    <property type="status" value="ALT_SEQ"/>
    <property type="molecule type" value="Genomic_DNA"/>
</dbReference>
<dbReference type="EMBL" id="AB022210">
    <property type="protein sequence ID" value="BAB09326.1"/>
    <property type="status" value="ALT_SEQ"/>
    <property type="molecule type" value="Genomic_DNA"/>
</dbReference>
<dbReference type="EMBL" id="CP002688">
    <property type="protein sequence ID" value="AED94824.1"/>
    <property type="molecule type" value="Genomic_DNA"/>
</dbReference>
<dbReference type="EMBL" id="AF367296">
    <property type="protein sequence ID" value="AAK32883.1"/>
    <property type="status" value="ALT_SEQ"/>
    <property type="molecule type" value="mRNA"/>
</dbReference>
<dbReference type="EMBL" id="AY091687">
    <property type="protein sequence ID" value="AAM10286.1"/>
    <property type="molecule type" value="mRNA"/>
</dbReference>
<dbReference type="EMBL" id="AK176100">
    <property type="protein sequence ID" value="BAD43863.1"/>
    <property type="molecule type" value="mRNA"/>
</dbReference>
<dbReference type="EMBL" id="AK220711">
    <property type="protein sequence ID" value="BAD93823.1"/>
    <property type="molecule type" value="mRNA"/>
</dbReference>
<dbReference type="EMBL" id="AK220893">
    <property type="protein sequence ID" value="BAD94308.1"/>
    <property type="molecule type" value="mRNA"/>
</dbReference>
<dbReference type="EMBL" id="AK221968">
    <property type="protein sequence ID" value="BAD94484.1"/>
    <property type="status" value="ALT_INIT"/>
    <property type="molecule type" value="mRNA"/>
</dbReference>
<dbReference type="RefSeq" id="NP_199069.1">
    <molecule id="Q9FQ02-1"/>
    <property type="nucleotide sequence ID" value="NM_123619.4"/>
</dbReference>
<dbReference type="SMR" id="Q9FQ02"/>
<dbReference type="FunCoup" id="Q9FQ02">
    <property type="interactions" value="4015"/>
</dbReference>
<dbReference type="STRING" id="3702.Q9FQ02"/>
<dbReference type="iPTMnet" id="Q9FQ02"/>
<dbReference type="PaxDb" id="3702-AT5G42540.2"/>
<dbReference type="ProteomicsDB" id="242382">
    <molecule id="Q9FQ02-1"/>
</dbReference>
<dbReference type="EnsemblPlants" id="AT5G42540.1">
    <molecule id="Q9FQ02-1"/>
    <property type="protein sequence ID" value="AT5G42540.1"/>
    <property type="gene ID" value="AT5G42540"/>
</dbReference>
<dbReference type="GeneID" id="834261"/>
<dbReference type="Gramene" id="AT5G42540.1">
    <molecule id="Q9FQ02-1"/>
    <property type="protein sequence ID" value="AT5G42540.1"/>
    <property type="gene ID" value="AT5G42540"/>
</dbReference>
<dbReference type="KEGG" id="ath:AT5G42540"/>
<dbReference type="Araport" id="AT5G42540"/>
<dbReference type="TAIR" id="AT5G42540">
    <property type="gene designation" value="XRN2"/>
</dbReference>
<dbReference type="eggNOG" id="KOG2044">
    <property type="taxonomic scope" value="Eukaryota"/>
</dbReference>
<dbReference type="HOGENOM" id="CLU_006038_1_0_1"/>
<dbReference type="InParanoid" id="Q9FQ02"/>
<dbReference type="OMA" id="NNIFQRR"/>
<dbReference type="OrthoDB" id="372487at2759"/>
<dbReference type="PhylomeDB" id="Q9FQ02"/>
<dbReference type="CD-CODE" id="4299E36E">
    <property type="entry name" value="Nucleolus"/>
</dbReference>
<dbReference type="PRO" id="PR:Q9FQ02"/>
<dbReference type="Proteomes" id="UP000006548">
    <property type="component" value="Chromosome 5"/>
</dbReference>
<dbReference type="ExpressionAtlas" id="Q9FQ02">
    <property type="expression patterns" value="baseline and differential"/>
</dbReference>
<dbReference type="GO" id="GO:0005634">
    <property type="term" value="C:nucleus"/>
    <property type="evidence" value="ECO:0000314"/>
    <property type="project" value="UniProtKB"/>
</dbReference>
<dbReference type="GO" id="GO:0004534">
    <property type="term" value="F:5'-3' RNA exonuclease activity"/>
    <property type="evidence" value="ECO:0000314"/>
    <property type="project" value="UniProtKB"/>
</dbReference>
<dbReference type="GO" id="GO:0003723">
    <property type="term" value="F:RNA binding"/>
    <property type="evidence" value="ECO:0000318"/>
    <property type="project" value="GO_Central"/>
</dbReference>
<dbReference type="GO" id="GO:0008270">
    <property type="term" value="F:zinc ion binding"/>
    <property type="evidence" value="ECO:0007669"/>
    <property type="project" value="UniProtKB-KW"/>
</dbReference>
<dbReference type="GO" id="GO:0010587">
    <property type="term" value="P:miRNA catabolic process"/>
    <property type="evidence" value="ECO:0000315"/>
    <property type="project" value="UniProtKB"/>
</dbReference>
<dbReference type="GO" id="GO:0006397">
    <property type="term" value="P:mRNA processing"/>
    <property type="evidence" value="ECO:0007669"/>
    <property type="project" value="UniProtKB-KW"/>
</dbReference>
<dbReference type="GO" id="GO:0060149">
    <property type="term" value="P:negative regulation of post-transcriptional gene silencing"/>
    <property type="evidence" value="ECO:0000315"/>
    <property type="project" value="UniProtKB"/>
</dbReference>
<dbReference type="GO" id="GO:0071035">
    <property type="term" value="P:nuclear polyadenylation-dependent rRNA catabolic process"/>
    <property type="evidence" value="ECO:0000315"/>
    <property type="project" value="UniProtKB"/>
</dbReference>
<dbReference type="GO" id="GO:0000956">
    <property type="term" value="P:nuclear-transcribed mRNA catabolic process"/>
    <property type="evidence" value="ECO:0000318"/>
    <property type="project" value="GO_Central"/>
</dbReference>
<dbReference type="GO" id="GO:0000967">
    <property type="term" value="P:rRNA 5'-end processing"/>
    <property type="evidence" value="ECO:0000315"/>
    <property type="project" value="UniProtKB"/>
</dbReference>
<dbReference type="CDD" id="cd18673">
    <property type="entry name" value="PIN_XRN1-2-like"/>
    <property type="match status" value="1"/>
</dbReference>
<dbReference type="FunFam" id="1.25.40.1050:FF:000006">
    <property type="entry name" value="5'-3' exoribonuclease"/>
    <property type="match status" value="1"/>
</dbReference>
<dbReference type="FunFam" id="3.40.50.12390:FF:000001">
    <property type="entry name" value="5'-3' exoribonuclease"/>
    <property type="match status" value="1"/>
</dbReference>
<dbReference type="FunFam" id="3.40.50.12390:FF:000003">
    <property type="entry name" value="5'-3' exoribonuclease"/>
    <property type="match status" value="1"/>
</dbReference>
<dbReference type="Gene3D" id="1.25.40.1050">
    <property type="match status" value="1"/>
</dbReference>
<dbReference type="Gene3D" id="3.40.50.12390">
    <property type="match status" value="2"/>
</dbReference>
<dbReference type="InterPro" id="IPR027073">
    <property type="entry name" value="5_3_exoribonuclease"/>
</dbReference>
<dbReference type="InterPro" id="IPR041412">
    <property type="entry name" value="Xrn1_helical"/>
</dbReference>
<dbReference type="InterPro" id="IPR004859">
    <property type="entry name" value="Xrn1_N"/>
</dbReference>
<dbReference type="InterPro" id="IPR017151">
    <property type="entry name" value="Xrn2/3/4"/>
</dbReference>
<dbReference type="InterPro" id="IPR001878">
    <property type="entry name" value="Znf_CCHC"/>
</dbReference>
<dbReference type="InterPro" id="IPR036875">
    <property type="entry name" value="Znf_CCHC_sf"/>
</dbReference>
<dbReference type="PANTHER" id="PTHR12341:SF64">
    <property type="entry name" value="5'-3' EXORIBONUCLEASE 2"/>
    <property type="match status" value="1"/>
</dbReference>
<dbReference type="PANTHER" id="PTHR12341">
    <property type="entry name" value="5'-&gt;3' EXORIBONUCLEASE"/>
    <property type="match status" value="1"/>
</dbReference>
<dbReference type="Pfam" id="PF17846">
    <property type="entry name" value="XRN_M"/>
    <property type="match status" value="1"/>
</dbReference>
<dbReference type="Pfam" id="PF03159">
    <property type="entry name" value="XRN_N"/>
    <property type="match status" value="1"/>
</dbReference>
<dbReference type="Pfam" id="PF00098">
    <property type="entry name" value="zf-CCHC"/>
    <property type="match status" value="1"/>
</dbReference>
<dbReference type="PIRSF" id="PIRSF037239">
    <property type="entry name" value="Exonuclease_Xrn2"/>
    <property type="match status" value="1"/>
</dbReference>
<dbReference type="SMART" id="SM00343">
    <property type="entry name" value="ZnF_C2HC"/>
    <property type="match status" value="1"/>
</dbReference>
<dbReference type="SUPFAM" id="SSF57756">
    <property type="entry name" value="Retrovirus zinc finger-like domains"/>
    <property type="match status" value="1"/>
</dbReference>
<dbReference type="PROSITE" id="PS50158">
    <property type="entry name" value="ZF_CCHC"/>
    <property type="match status" value="1"/>
</dbReference>
<feature type="chain" id="PRO_0000348954" description="5'-3' exoribonuclease 2">
    <location>
        <begin position="1"/>
        <end position="1012"/>
    </location>
</feature>
<feature type="zinc finger region" description="CCHC-type" evidence="1">
    <location>
        <begin position="264"/>
        <end position="281"/>
    </location>
</feature>
<feature type="region of interest" description="Disordered" evidence="2">
    <location>
        <begin position="411"/>
        <end position="439"/>
    </location>
</feature>
<feature type="region of interest" description="Disordered" evidence="2">
    <location>
        <begin position="888"/>
        <end position="976"/>
    </location>
</feature>
<feature type="region of interest" description="Disordered" evidence="2">
    <location>
        <begin position="990"/>
        <end position="1012"/>
    </location>
</feature>
<feature type="compositionally biased region" description="Basic and acidic residues" evidence="2">
    <location>
        <begin position="415"/>
        <end position="433"/>
    </location>
</feature>
<feature type="compositionally biased region" description="Polar residues" evidence="2">
    <location>
        <begin position="904"/>
        <end position="914"/>
    </location>
</feature>
<feature type="compositionally biased region" description="Basic and acidic residues" evidence="2">
    <location>
        <begin position="918"/>
        <end position="928"/>
    </location>
</feature>
<feature type="compositionally biased region" description="Basic and acidic residues" evidence="2">
    <location>
        <begin position="950"/>
        <end position="962"/>
    </location>
</feature>
<feature type="compositionally biased region" description="Basic residues" evidence="2">
    <location>
        <begin position="990"/>
        <end position="1002"/>
    </location>
</feature>
<feature type="sequence conflict" description="In Ref. 5; BAD93823." evidence="7" ref="5">
    <original>V</original>
    <variation>D</variation>
    <location>
        <position position="390"/>
    </location>
</feature>
<feature type="sequence conflict" description="In Ref. 5; BAD93823." evidence="7" ref="5">
    <original>R</original>
    <variation>S</variation>
    <location>
        <position position="414"/>
    </location>
</feature>
<reference key="1">
    <citation type="journal article" date="2000" name="Proc. Natl. Acad. Sci. U.S.A.">
        <title>Novel features of the XRN-family in Arabidopsis: evidence that AtXRN4, one of several orthologs of nuclear Xrn2p/Rat1p, functions in the cytoplasm.</title>
        <authorList>
            <person name="Kastenmayer J.P."/>
            <person name="Green P.J."/>
        </authorList>
    </citation>
    <scope>NUCLEOTIDE SEQUENCE [MRNA]</scope>
    <scope>FUNCTION</scope>
    <scope>CATALYTIC ACTIVITY</scope>
    <scope>TISSUE SPECIFICITY</scope>
    <scope>SUBCELLULAR LOCATION</scope>
</reference>
<reference key="2">
    <citation type="journal article" date="2000" name="DNA Res.">
        <title>Structural analysis of Arabidopsis thaliana chromosome 5. X. Sequence features of the regions of 3,076,755 bp covered by sixty P1 and TAC clones.</title>
        <authorList>
            <person name="Sato S."/>
            <person name="Nakamura Y."/>
            <person name="Kaneko T."/>
            <person name="Katoh T."/>
            <person name="Asamizu E."/>
            <person name="Kotani H."/>
            <person name="Tabata S."/>
        </authorList>
    </citation>
    <scope>NUCLEOTIDE SEQUENCE [LARGE SCALE GENOMIC DNA]</scope>
    <source>
        <strain>cv. Columbia</strain>
    </source>
</reference>
<reference key="3">
    <citation type="journal article" date="2017" name="Plant J.">
        <title>Araport11: a complete reannotation of the Arabidopsis thaliana reference genome.</title>
        <authorList>
            <person name="Cheng C.Y."/>
            <person name="Krishnakumar V."/>
            <person name="Chan A.P."/>
            <person name="Thibaud-Nissen F."/>
            <person name="Schobel S."/>
            <person name="Town C.D."/>
        </authorList>
    </citation>
    <scope>GENOME REANNOTATION</scope>
    <source>
        <strain>cv. Columbia</strain>
    </source>
</reference>
<reference key="4">
    <citation type="journal article" date="2003" name="Science">
        <title>Empirical analysis of transcriptional activity in the Arabidopsis genome.</title>
        <authorList>
            <person name="Yamada K."/>
            <person name="Lim J."/>
            <person name="Dale J.M."/>
            <person name="Chen H."/>
            <person name="Shinn P."/>
            <person name="Palm C.J."/>
            <person name="Southwick A.M."/>
            <person name="Wu H.C."/>
            <person name="Kim C.J."/>
            <person name="Nguyen M."/>
            <person name="Pham P.K."/>
            <person name="Cheuk R.F."/>
            <person name="Karlin-Newmann G."/>
            <person name="Liu S.X."/>
            <person name="Lam B."/>
            <person name="Sakano H."/>
            <person name="Wu T."/>
            <person name="Yu G."/>
            <person name="Miranda M."/>
            <person name="Quach H.L."/>
            <person name="Tripp M."/>
            <person name="Chang C.H."/>
            <person name="Lee J.M."/>
            <person name="Toriumi M.J."/>
            <person name="Chan M.M."/>
            <person name="Tang C.C."/>
            <person name="Onodera C.S."/>
            <person name="Deng J.M."/>
            <person name="Akiyama K."/>
            <person name="Ansari Y."/>
            <person name="Arakawa T."/>
            <person name="Banh J."/>
            <person name="Banno F."/>
            <person name="Bowser L."/>
            <person name="Brooks S.Y."/>
            <person name="Carninci P."/>
            <person name="Chao Q."/>
            <person name="Choy N."/>
            <person name="Enju A."/>
            <person name="Goldsmith A.D."/>
            <person name="Gurjal M."/>
            <person name="Hansen N.F."/>
            <person name="Hayashizaki Y."/>
            <person name="Johnson-Hopson C."/>
            <person name="Hsuan V.W."/>
            <person name="Iida K."/>
            <person name="Karnes M."/>
            <person name="Khan S."/>
            <person name="Koesema E."/>
            <person name="Ishida J."/>
            <person name="Jiang P.X."/>
            <person name="Jones T."/>
            <person name="Kawai J."/>
            <person name="Kamiya A."/>
            <person name="Meyers C."/>
            <person name="Nakajima M."/>
            <person name="Narusaka M."/>
            <person name="Seki M."/>
            <person name="Sakurai T."/>
            <person name="Satou M."/>
            <person name="Tamse R."/>
            <person name="Vaysberg M."/>
            <person name="Wallender E.K."/>
            <person name="Wong C."/>
            <person name="Yamamura Y."/>
            <person name="Yuan S."/>
            <person name="Shinozaki K."/>
            <person name="Davis R.W."/>
            <person name="Theologis A."/>
            <person name="Ecker J.R."/>
        </authorList>
    </citation>
    <scope>NUCLEOTIDE SEQUENCE [LARGE SCALE MRNA]</scope>
    <source>
        <strain>cv. Columbia</strain>
    </source>
</reference>
<reference key="5">
    <citation type="submission" date="2005-03" db="EMBL/GenBank/DDBJ databases">
        <title>Large-scale analysis of RIKEN Arabidopsis full-length (RAFL) cDNAs.</title>
        <authorList>
            <person name="Totoki Y."/>
            <person name="Seki M."/>
            <person name="Ishida J."/>
            <person name="Nakajima M."/>
            <person name="Enju A."/>
            <person name="Kamiya A."/>
            <person name="Narusaka M."/>
            <person name="Shin-i T."/>
            <person name="Nakagawa M."/>
            <person name="Sakamoto N."/>
            <person name="Oishi K."/>
            <person name="Kohara Y."/>
            <person name="Kobayashi M."/>
            <person name="Toyoda A."/>
            <person name="Sakaki Y."/>
            <person name="Sakurai T."/>
            <person name="Iida K."/>
            <person name="Akiyama K."/>
            <person name="Satou M."/>
            <person name="Toyoda T."/>
            <person name="Konagaya A."/>
            <person name="Carninci P."/>
            <person name="Kawai J."/>
            <person name="Hayashizaki Y."/>
            <person name="Shinozaki K."/>
        </authorList>
    </citation>
    <scope>NUCLEOTIDE SEQUENCE [LARGE SCALE MRNA]</scope>
    <source>
        <strain>cv. Columbia</strain>
    </source>
</reference>
<reference key="6">
    <citation type="journal article" date="2007" name="Plant Cell">
        <title>Arabidopsis FIERY1, XRN2, and XRN3 are endogenous RNA silencing suppressors.</title>
        <authorList>
            <person name="Gy I."/>
            <person name="Gasciolli V."/>
            <person name="Lauressergues D."/>
            <person name="Morel J.-B."/>
            <person name="Gombert J."/>
            <person name="Proux F."/>
            <person name="Proux C."/>
            <person name="Vaucheret H."/>
            <person name="Mallory A.C."/>
        </authorList>
    </citation>
    <scope>FUNCTION</scope>
</reference>
<reference key="7">
    <citation type="journal article" date="2010" name="Nucleic Acids Res.">
        <title>Arabidopsis thaliana XRN2 is required for primary cleavage in the pre-ribosomal RNA.</title>
        <authorList>
            <person name="Zakrzewska-Placzek M."/>
            <person name="Souret F.F."/>
            <person name="Sobczyk G.J."/>
            <person name="Green P.J."/>
            <person name="Kufel J."/>
        </authorList>
    </citation>
    <scope>FUNCTION</scope>
</reference>
<gene>
    <name evidence="6" type="primary">XRN2</name>
    <name type="ordered locus">At5g42540/At5g42550</name>
    <name type="ORF">K16E1.1/K16E1.2</name>
</gene>
<evidence type="ECO:0000255" key="1">
    <source>
        <dbReference type="PROSITE-ProRule" id="PRU00047"/>
    </source>
</evidence>
<evidence type="ECO:0000256" key="2">
    <source>
        <dbReference type="SAM" id="MobiDB-lite"/>
    </source>
</evidence>
<evidence type="ECO:0000269" key="3">
    <source>
    </source>
</evidence>
<evidence type="ECO:0000269" key="4">
    <source>
    </source>
</evidence>
<evidence type="ECO:0000269" key="5">
    <source>
    </source>
</evidence>
<evidence type="ECO:0000303" key="6">
    <source>
    </source>
</evidence>
<evidence type="ECO:0000305" key="7"/>
<accession>Q9FQ02</accession>
<accession>Q56WR6</accession>
<accession>Q570J7</accession>
<accession>Q9AST0</accession>
<accession>Q9FH70</accession>
<accession>Q9FH71</accession>
<protein>
    <recommendedName>
        <fullName evidence="7">5'-3' exoribonuclease 2</fullName>
        <shortName evidence="6">AtXRN2</shortName>
        <ecNumber evidence="3">3.1.13.-</ecNumber>
    </recommendedName>
    <alternativeName>
        <fullName evidence="7">Protein EXORIBONUCLEASE 2</fullName>
    </alternativeName>
</protein>
<organism>
    <name type="scientific">Arabidopsis thaliana</name>
    <name type="common">Mouse-ear cress</name>
    <dbReference type="NCBI Taxonomy" id="3702"/>
    <lineage>
        <taxon>Eukaryota</taxon>
        <taxon>Viridiplantae</taxon>
        <taxon>Streptophyta</taxon>
        <taxon>Embryophyta</taxon>
        <taxon>Tracheophyta</taxon>
        <taxon>Spermatophyta</taxon>
        <taxon>Magnoliopsida</taxon>
        <taxon>eudicotyledons</taxon>
        <taxon>Gunneridae</taxon>
        <taxon>Pentapetalae</taxon>
        <taxon>rosids</taxon>
        <taxon>malvids</taxon>
        <taxon>Brassicales</taxon>
        <taxon>Brassicaceae</taxon>
        <taxon>Camelineae</taxon>
        <taxon>Arabidopsis</taxon>
    </lineage>
</organism>
<keyword id="KW-0025">Alternative splicing</keyword>
<keyword id="KW-0269">Exonuclease</keyword>
<keyword id="KW-0378">Hydrolase</keyword>
<keyword id="KW-0479">Metal-binding</keyword>
<keyword id="KW-0507">mRNA processing</keyword>
<keyword id="KW-0540">Nuclease</keyword>
<keyword id="KW-0539">Nucleus</keyword>
<keyword id="KW-1185">Reference proteome</keyword>
<keyword id="KW-0698">rRNA processing</keyword>
<keyword id="KW-0862">Zinc</keyword>
<keyword id="KW-0863">Zinc-finger</keyword>
<comment type="function">
    <text evidence="3 4 5">Possesses 5'-&gt;3' exoribonuclease activity (PubMed:11106401). Acts as an endogenous post-transcriptional gene silencing (PTGS) suppressor. Degrades miRNA-derived loops, excised during miRNA maturation in the nucleus (PubMed:17993620). Involved in pre-rRNA processing. Involved in the primary exonucleolytic shortening of the 5' external transcribed spacer (5'ETS), required for endonucleolytic processing at site P by the U3 snoRNP complex. Involved with XRN3 in the 5'-end processing of 5.8S and 25S rRNAs. Contributes with XRN3 to polyadenylation-dependent nuclear RNA surveillance. Involved in the degradation of aberrant polyadenylated pre-rRNA through 5'-end processing (PubMed:20338880).</text>
</comment>
<comment type="subcellular location">
    <subcellularLocation>
        <location evidence="3">Nucleus</location>
    </subcellularLocation>
</comment>
<comment type="alternative products">
    <event type="alternative splicing"/>
    <isoform>
        <id>Q9FQ02-1</id>
        <name>1</name>
        <sequence type="displayed"/>
    </isoform>
    <text>A number of isoforms are produced. According to EST sequences.</text>
</comment>
<comment type="tissue specificity">
    <text evidence="3">Expressed in roots, leaves, stems and flowers.</text>
</comment>
<comment type="similarity">
    <text evidence="7">Belongs to the 5'-3' exonuclease family. XRN2/RAT1 subfamily.</text>
</comment>
<comment type="sequence caution" evidence="7">
    <conflict type="erroneous termination">
        <sequence resource="EMBL-CDS" id="AAK32883"/>
    </conflict>
    <text>Truncated C-terminus.</text>
</comment>
<comment type="sequence caution" evidence="7">
    <conflict type="erroneous gene model prediction">
        <sequence resource="EMBL-CDS" id="BAB09325"/>
    </conflict>
    <text>Was originally thought to correspond to two different genes At5g42540 and At5g42550.</text>
</comment>
<comment type="sequence caution" evidence="7">
    <conflict type="erroneous gene model prediction">
        <sequence resource="EMBL-CDS" id="BAB09326"/>
    </conflict>
    <text>Was originally thought to correspond to two different genes At5g42540 and At5g42550.</text>
</comment>
<comment type="sequence caution" evidence="7">
    <conflict type="erroneous initiation">
        <sequence resource="EMBL-CDS" id="BAD94484"/>
    </conflict>
    <text>Truncated N-terminus.</text>
</comment>
<sequence>MGVPSFYRWLIQRYPLTIQEVIEEEPLEVNGGGVTIPIDSSKPNPNGYEYDNLYLDMNGIIHPCFHPEDKPSPTTFTEVFQCMFDYIDRLFVMVRPRKLLFMAIDGVAPRAKMNQQRARRFRAAKDAAEAAAEEEQLREEFEREGKKLPPKVDSQVFDSNVITPGTEFMATLSFALRYYIHVRLNSDPGWKNIKVILSDANVPGEGEHKIMSYIRCNKNHPGYNPNTHHCLYGLDADLIMLSLATHEIHFSILREVVFFPGEEGKCFLCGQEGHRAADCEGKIKRKTGEMLDNTEADVVVKKPYEFVNIWILREYLEHDMQIPGAKKNLDRLIDDFIFICFFVGNDFLPHMPTLEIREGAIELLMSVYKNKFRSAKKYLTDSSKLNLRNVERFIKAVGMYENQIFQKRAQVQQRQSERFRRDKARDKARDNARDNAQASRQFSGKLVQLDSLDEVSDSLHSSPSRKYLRLSLDDNIGVANVETENSLKAEELDNEEDLKFKLKKLLRDKGDGFRSGNGEQDKVKLNKVGWRERYYEEKFAAKSVEEMEQIRRDVVLKYTEGLCWIMHYYYHGVCSWNWFYPYHYAPFASDLKGLEKLDIKFELGSPFKPFNQLLAVLPSASAHALPECYRSLMTNPDSPIADFYPADFEIDMNGKRYSWQGISKLPFVEEKRLLEAAAQVEKSLTNEEIRRNSALFDMLFVVASHPLGELIRSLNSRTNNLSNEERATIIEKIDPGLSDGMNGYIASCGGDSQPSCFCSTVEGMEDVLTNQVICAIYKLPEDIRGSEITHQIPRLAIPKKTISLVDLKSGGLLWHEDGDKRRAPPKVIKIKRYNPEGSISGGRLGKASHRLVLQTINAQPDYMNINSEPALCPNTVFQNERVPKKIPTFKDNGIQWISPPPSQITPKKMNSPQRQKAWKKDETPQSREKSKKLKSSLKVNPLKMKKTKSPQREFTREKKKENITPQRKLTKAQRQVKHIRMMEEAKMIKQRKKEKYLRKKAKYAQGAPPKTA</sequence>
<proteinExistence type="evidence at protein level"/>
<name>XRN2_ARATH</name>